<organism>
    <name type="scientific">Buchnera aphidicola subsp. Cinara cedri (strain Cc)</name>
    <dbReference type="NCBI Taxonomy" id="372461"/>
    <lineage>
        <taxon>Bacteria</taxon>
        <taxon>Pseudomonadati</taxon>
        <taxon>Pseudomonadota</taxon>
        <taxon>Gammaproteobacteria</taxon>
        <taxon>Enterobacterales</taxon>
        <taxon>Erwiniaceae</taxon>
        <taxon>Buchnera</taxon>
    </lineage>
</organism>
<reference key="1">
    <citation type="journal article" date="2006" name="Science">
        <title>A small microbial genome: the end of a long symbiotic relationship?</title>
        <authorList>
            <person name="Perez-Brocal V."/>
            <person name="Gil R."/>
            <person name="Ramos S."/>
            <person name="Lamelas A."/>
            <person name="Postigo M."/>
            <person name="Michelena J.M."/>
            <person name="Silva F.J."/>
            <person name="Moya A."/>
            <person name="Latorre A."/>
        </authorList>
    </citation>
    <scope>NUCLEOTIDE SEQUENCE [LARGE SCALE GENOMIC DNA]</scope>
    <source>
        <strain>Cc</strain>
    </source>
</reference>
<keyword id="KW-1185">Reference proteome</keyword>
<keyword id="KW-0687">Ribonucleoprotein</keyword>
<keyword id="KW-0689">Ribosomal protein</keyword>
<keyword id="KW-0694">RNA-binding</keyword>
<keyword id="KW-0699">rRNA-binding</keyword>
<feature type="chain" id="PRO_0000294725" description="Small ribosomal subunit protein uS11">
    <location>
        <begin position="1"/>
        <end position="130"/>
    </location>
</feature>
<accession>Q057C7</accession>
<proteinExistence type="inferred from homology"/>
<evidence type="ECO:0000255" key="1">
    <source>
        <dbReference type="HAMAP-Rule" id="MF_01310"/>
    </source>
</evidence>
<evidence type="ECO:0000305" key="2"/>
<comment type="function">
    <text evidence="1">Located on the platform of the 30S subunit, it bridges several disparate RNA helices of the 16S rRNA. Forms part of the Shine-Dalgarno cleft in the 70S ribosome.</text>
</comment>
<comment type="subunit">
    <text evidence="1">Part of the 30S ribosomal subunit. Interacts with proteins S7 and S18. Binds to IF-3.</text>
</comment>
<comment type="similarity">
    <text evidence="1">Belongs to the universal ribosomal protein uS11 family.</text>
</comment>
<gene>
    <name evidence="1" type="primary">rpsK</name>
    <name type="ordered locus">BCc_318</name>
</gene>
<sequence length="130" mass="14238">MSKKKLNQPKKRIKRQILDGIAHIHASFNNTIVTITDRKGNTLGWATSGGSGFRGSRKSTPFAAQVAAEKCADRVKDYGIKNLEVMIKGPGPGRESTIRALNSSGFRITNIIDVTPIPHNGCRPSKKRRV</sequence>
<protein>
    <recommendedName>
        <fullName evidence="1">Small ribosomal subunit protein uS11</fullName>
    </recommendedName>
    <alternativeName>
        <fullName evidence="2">30S ribosomal protein S11</fullName>
    </alternativeName>
</protein>
<dbReference type="EMBL" id="CP000263">
    <property type="protein sequence ID" value="ABJ90772.1"/>
    <property type="molecule type" value="Genomic_DNA"/>
</dbReference>
<dbReference type="RefSeq" id="WP_011672691.1">
    <property type="nucleotide sequence ID" value="NC_008513.1"/>
</dbReference>
<dbReference type="SMR" id="Q057C7"/>
<dbReference type="STRING" id="372461.BCc_318"/>
<dbReference type="KEGG" id="bcc:BCc_318"/>
<dbReference type="eggNOG" id="COG0100">
    <property type="taxonomic scope" value="Bacteria"/>
</dbReference>
<dbReference type="HOGENOM" id="CLU_072439_5_0_6"/>
<dbReference type="OrthoDB" id="9806415at2"/>
<dbReference type="Proteomes" id="UP000000669">
    <property type="component" value="Chromosome"/>
</dbReference>
<dbReference type="GO" id="GO:1990904">
    <property type="term" value="C:ribonucleoprotein complex"/>
    <property type="evidence" value="ECO:0007669"/>
    <property type="project" value="UniProtKB-KW"/>
</dbReference>
<dbReference type="GO" id="GO:0005840">
    <property type="term" value="C:ribosome"/>
    <property type="evidence" value="ECO:0007669"/>
    <property type="project" value="UniProtKB-KW"/>
</dbReference>
<dbReference type="GO" id="GO:0019843">
    <property type="term" value="F:rRNA binding"/>
    <property type="evidence" value="ECO:0007669"/>
    <property type="project" value="UniProtKB-UniRule"/>
</dbReference>
<dbReference type="GO" id="GO:0003735">
    <property type="term" value="F:structural constituent of ribosome"/>
    <property type="evidence" value="ECO:0007669"/>
    <property type="project" value="InterPro"/>
</dbReference>
<dbReference type="GO" id="GO:0006412">
    <property type="term" value="P:translation"/>
    <property type="evidence" value="ECO:0007669"/>
    <property type="project" value="UniProtKB-UniRule"/>
</dbReference>
<dbReference type="FunFam" id="3.30.420.80:FF:000001">
    <property type="entry name" value="30S ribosomal protein S11"/>
    <property type="match status" value="1"/>
</dbReference>
<dbReference type="Gene3D" id="3.30.420.80">
    <property type="entry name" value="Ribosomal protein S11"/>
    <property type="match status" value="1"/>
</dbReference>
<dbReference type="HAMAP" id="MF_01310">
    <property type="entry name" value="Ribosomal_uS11"/>
    <property type="match status" value="1"/>
</dbReference>
<dbReference type="InterPro" id="IPR001971">
    <property type="entry name" value="Ribosomal_uS11"/>
</dbReference>
<dbReference type="InterPro" id="IPR019981">
    <property type="entry name" value="Ribosomal_uS11_bac-type"/>
</dbReference>
<dbReference type="InterPro" id="IPR018102">
    <property type="entry name" value="Ribosomal_uS11_CS"/>
</dbReference>
<dbReference type="InterPro" id="IPR036967">
    <property type="entry name" value="Ribosomal_uS11_sf"/>
</dbReference>
<dbReference type="NCBIfam" id="NF003698">
    <property type="entry name" value="PRK05309.1"/>
    <property type="match status" value="1"/>
</dbReference>
<dbReference type="NCBIfam" id="TIGR03632">
    <property type="entry name" value="uS11_bact"/>
    <property type="match status" value="1"/>
</dbReference>
<dbReference type="PANTHER" id="PTHR11759">
    <property type="entry name" value="40S RIBOSOMAL PROTEIN S14/30S RIBOSOMAL PROTEIN S11"/>
    <property type="match status" value="1"/>
</dbReference>
<dbReference type="Pfam" id="PF00411">
    <property type="entry name" value="Ribosomal_S11"/>
    <property type="match status" value="1"/>
</dbReference>
<dbReference type="PIRSF" id="PIRSF002131">
    <property type="entry name" value="Ribosomal_S11"/>
    <property type="match status" value="1"/>
</dbReference>
<dbReference type="SUPFAM" id="SSF53137">
    <property type="entry name" value="Translational machinery components"/>
    <property type="match status" value="1"/>
</dbReference>
<dbReference type="PROSITE" id="PS00054">
    <property type="entry name" value="RIBOSOMAL_S11"/>
    <property type="match status" value="1"/>
</dbReference>
<name>RS11_BUCCC</name>